<keyword id="KW-0009">Actin-binding</keyword>
<keyword id="KW-0963">Cytoplasm</keyword>
<keyword id="KW-0217">Developmental protein</keyword>
<keyword id="KW-0221">Differentiation</keyword>
<keyword id="KW-0488">Methylation</keyword>
<keyword id="KW-0597">Phosphoprotein</keyword>
<keyword id="KW-1267">Proteomics identification</keyword>
<keyword id="KW-1185">Reference proteome</keyword>
<keyword id="KW-0744">Spermatogenesis</keyword>
<name>WIPF3_HUMAN</name>
<accession>A6NGB9</accession>
<accession>B8ZZV2</accession>
<dbReference type="EMBL" id="AC004912">
    <property type="status" value="NOT_ANNOTATED_CDS"/>
    <property type="molecule type" value="Genomic_DNA"/>
</dbReference>
<dbReference type="EMBL" id="CH471073">
    <property type="protein sequence ID" value="EAW93924.1"/>
    <property type="molecule type" value="Genomic_DNA"/>
</dbReference>
<dbReference type="EMBL" id="BX107905">
    <property type="status" value="NOT_ANNOTATED_CDS"/>
    <property type="molecule type" value="mRNA"/>
</dbReference>
<dbReference type="CCDS" id="CCDS56472.1"/>
<dbReference type="RefSeq" id="NP_001073998.2">
    <property type="nucleotide sequence ID" value="NM_001080529.3"/>
</dbReference>
<dbReference type="BioGRID" id="569353">
    <property type="interactions" value="14"/>
</dbReference>
<dbReference type="ELM" id="A6NGB9"/>
<dbReference type="FunCoup" id="A6NGB9">
    <property type="interactions" value="430"/>
</dbReference>
<dbReference type="IntAct" id="A6NGB9">
    <property type="interactions" value="6"/>
</dbReference>
<dbReference type="STRING" id="9606.ENSP00000242140"/>
<dbReference type="GlyCosmos" id="A6NGB9">
    <property type="glycosylation" value="1 site, 1 glycan"/>
</dbReference>
<dbReference type="GlyGen" id="A6NGB9">
    <property type="glycosylation" value="3 sites, 1 O-linked glycan (1 site)"/>
</dbReference>
<dbReference type="iPTMnet" id="A6NGB9"/>
<dbReference type="PhosphoSitePlus" id="A6NGB9"/>
<dbReference type="BioMuta" id="WIPF3"/>
<dbReference type="jPOST" id="A6NGB9"/>
<dbReference type="MassIVE" id="A6NGB9"/>
<dbReference type="PaxDb" id="9606-ENSP00000242140"/>
<dbReference type="PeptideAtlas" id="A6NGB9"/>
<dbReference type="ProteomicsDB" id="1115"/>
<dbReference type="ProteomicsDB" id="7445"/>
<dbReference type="Pumba" id="A6NGB9"/>
<dbReference type="Antibodypedia" id="48600">
    <property type="antibodies" value="22 antibodies from 12 providers"/>
</dbReference>
<dbReference type="DNASU" id="644150"/>
<dbReference type="Ensembl" id="ENST00000242140.10">
    <property type="protein sequence ID" value="ENSP00000242140.6"/>
    <property type="gene ID" value="ENSG00000122574.12"/>
</dbReference>
<dbReference type="GeneID" id="644150"/>
<dbReference type="KEGG" id="hsa:644150"/>
<dbReference type="MANE-Select" id="ENST00000242140.10">
    <property type="protein sequence ID" value="ENSP00000242140.6"/>
    <property type="RefSeq nucleotide sequence ID" value="NM_001080529.3"/>
    <property type="RefSeq protein sequence ID" value="NP_001073998.2"/>
</dbReference>
<dbReference type="UCSC" id="uc022aaz.1">
    <property type="organism name" value="human"/>
</dbReference>
<dbReference type="AGR" id="HGNC:22004"/>
<dbReference type="CTD" id="644150"/>
<dbReference type="GeneCards" id="WIPF3"/>
<dbReference type="HGNC" id="HGNC:22004">
    <property type="gene designation" value="WIPF3"/>
</dbReference>
<dbReference type="HPA" id="ENSG00000122574">
    <property type="expression patterns" value="Tissue enhanced (ovary, skeletal muscle)"/>
</dbReference>
<dbReference type="MIM" id="612432">
    <property type="type" value="gene"/>
</dbReference>
<dbReference type="neXtProt" id="NX_A6NGB9"/>
<dbReference type="OpenTargets" id="ENSG00000122574"/>
<dbReference type="PharmGKB" id="PA162409231"/>
<dbReference type="VEuPathDB" id="HostDB:ENSG00000122574"/>
<dbReference type="eggNOG" id="KOG4462">
    <property type="taxonomic scope" value="Eukaryota"/>
</dbReference>
<dbReference type="GeneTree" id="ENSGT00940000160267"/>
<dbReference type="InParanoid" id="A6NGB9"/>
<dbReference type="OMA" id="IQHSHHT"/>
<dbReference type="OrthoDB" id="6157464at2759"/>
<dbReference type="PAN-GO" id="A6NGB9">
    <property type="GO annotations" value="2 GO annotations based on evolutionary models"/>
</dbReference>
<dbReference type="PhylomeDB" id="A6NGB9"/>
<dbReference type="PathwayCommons" id="A6NGB9"/>
<dbReference type="Reactome" id="R-HSA-2029482">
    <property type="pathway name" value="Regulation of actin dynamics for phagocytic cup formation"/>
</dbReference>
<dbReference type="Reactome" id="R-HSA-5663213">
    <property type="pathway name" value="RHO GTPases Activate WASPs and WAVEs"/>
</dbReference>
<dbReference type="Reactome" id="R-HSA-9013148">
    <property type="pathway name" value="CDC42 GTPase cycle"/>
</dbReference>
<dbReference type="Reactome" id="R-HSA-9013149">
    <property type="pathway name" value="RAC1 GTPase cycle"/>
</dbReference>
<dbReference type="Reactome" id="R-HSA-9664422">
    <property type="pathway name" value="FCGR3A-mediated phagocytosis"/>
</dbReference>
<dbReference type="SignaLink" id="A6NGB9"/>
<dbReference type="BioGRID-ORCS" id="644150">
    <property type="hits" value="16 hits in 1154 CRISPR screens"/>
</dbReference>
<dbReference type="GenomeRNAi" id="644150"/>
<dbReference type="Pharos" id="A6NGB9">
    <property type="development level" value="Tdark"/>
</dbReference>
<dbReference type="PRO" id="PR:A6NGB9"/>
<dbReference type="Proteomes" id="UP000005640">
    <property type="component" value="Chromosome 7"/>
</dbReference>
<dbReference type="RNAct" id="A6NGB9">
    <property type="molecule type" value="protein"/>
</dbReference>
<dbReference type="Bgee" id="ENSG00000122574">
    <property type="expression patterns" value="Expressed in tibialis anterior and 162 other cell types or tissues"/>
</dbReference>
<dbReference type="ExpressionAtlas" id="A6NGB9">
    <property type="expression patterns" value="baseline and differential"/>
</dbReference>
<dbReference type="GO" id="GO:0005829">
    <property type="term" value="C:cytosol"/>
    <property type="evidence" value="ECO:0000304"/>
    <property type="project" value="Reactome"/>
</dbReference>
<dbReference type="GO" id="GO:0005769">
    <property type="term" value="C:early endosome"/>
    <property type="evidence" value="ECO:0000318"/>
    <property type="project" value="GO_Central"/>
</dbReference>
<dbReference type="GO" id="GO:0055037">
    <property type="term" value="C:recycling endosome"/>
    <property type="evidence" value="ECO:0000318"/>
    <property type="project" value="GO_Central"/>
</dbReference>
<dbReference type="GO" id="GO:0071203">
    <property type="term" value="C:WASH complex"/>
    <property type="evidence" value="ECO:0000318"/>
    <property type="project" value="GO_Central"/>
</dbReference>
<dbReference type="GO" id="GO:0003779">
    <property type="term" value="F:actin binding"/>
    <property type="evidence" value="ECO:0007669"/>
    <property type="project" value="UniProtKB-KW"/>
</dbReference>
<dbReference type="GO" id="GO:0043014">
    <property type="term" value="F:alpha-tubulin binding"/>
    <property type="evidence" value="ECO:0000318"/>
    <property type="project" value="GO_Central"/>
</dbReference>
<dbReference type="GO" id="GO:0043015">
    <property type="term" value="F:gamma-tubulin binding"/>
    <property type="evidence" value="ECO:0000318"/>
    <property type="project" value="GO_Central"/>
</dbReference>
<dbReference type="GO" id="GO:0034314">
    <property type="term" value="P:Arp2/3 complex-mediated actin nucleation"/>
    <property type="evidence" value="ECO:0000318"/>
    <property type="project" value="GO_Central"/>
</dbReference>
<dbReference type="GO" id="GO:0030154">
    <property type="term" value="P:cell differentiation"/>
    <property type="evidence" value="ECO:0007669"/>
    <property type="project" value="UniProtKB-KW"/>
</dbReference>
<dbReference type="GO" id="GO:0032456">
    <property type="term" value="P:endocytic recycling"/>
    <property type="evidence" value="ECO:0000318"/>
    <property type="project" value="GO_Central"/>
</dbReference>
<dbReference type="GO" id="GO:0006887">
    <property type="term" value="P:exocytosis"/>
    <property type="evidence" value="ECO:0000318"/>
    <property type="project" value="GO_Central"/>
</dbReference>
<dbReference type="GO" id="GO:0042147">
    <property type="term" value="P:retrograde transport, endosome to Golgi"/>
    <property type="evidence" value="ECO:0000318"/>
    <property type="project" value="GO_Central"/>
</dbReference>
<dbReference type="GO" id="GO:0007283">
    <property type="term" value="P:spermatogenesis"/>
    <property type="evidence" value="ECO:0007669"/>
    <property type="project" value="UniProtKB-KW"/>
</dbReference>
<dbReference type="CDD" id="cd22077">
    <property type="entry name" value="WH2_WAS_WASL-2_3"/>
    <property type="match status" value="1"/>
</dbReference>
<dbReference type="InterPro" id="IPR028290">
    <property type="entry name" value="WASH1"/>
</dbReference>
<dbReference type="InterPro" id="IPR003124">
    <property type="entry name" value="WH2_dom"/>
</dbReference>
<dbReference type="PANTHER" id="PTHR23331">
    <property type="entry name" value="CXYORF1"/>
    <property type="match status" value="1"/>
</dbReference>
<dbReference type="PANTHER" id="PTHR23331:SF4">
    <property type="entry name" value="WAS_WASL-INTERACTING PROTEIN FAMILY MEMBER 3"/>
    <property type="match status" value="1"/>
</dbReference>
<dbReference type="Pfam" id="PF02205">
    <property type="entry name" value="WH2"/>
    <property type="match status" value="1"/>
</dbReference>
<dbReference type="SMART" id="SM00246">
    <property type="entry name" value="WH2"/>
    <property type="match status" value="1"/>
</dbReference>
<dbReference type="PROSITE" id="PS51082">
    <property type="entry name" value="WH2"/>
    <property type="match status" value="1"/>
</dbReference>
<feature type="chain" id="PRO_0000337997" description="WAS/WASL-interacting protein family member 3">
    <location>
        <begin position="1"/>
        <end position="483"/>
    </location>
</feature>
<feature type="domain" description="WH2" evidence="2">
    <location>
        <begin position="45"/>
        <end position="62"/>
    </location>
</feature>
<feature type="region of interest" description="Disordered" evidence="3">
    <location>
        <begin position="1"/>
        <end position="414"/>
    </location>
</feature>
<feature type="region of interest" description="Disordered" evidence="3">
    <location>
        <begin position="461"/>
        <end position="483"/>
    </location>
</feature>
<feature type="short sequence motif" description="Profilin-binding motif">
    <location>
        <begin position="3"/>
        <end position="8"/>
    </location>
</feature>
<feature type="short sequence motif" description="Profilin-binding motif">
    <location>
        <begin position="11"/>
        <end position="16"/>
    </location>
</feature>
<feature type="short sequence motif" description="Profilin-binding motif">
    <location>
        <begin position="20"/>
        <end position="25"/>
    </location>
</feature>
<feature type="short sequence motif" description="RLRK">
    <location>
        <begin position="58"/>
        <end position="61"/>
    </location>
</feature>
<feature type="short sequence motif" description="WASP-binding motif">
    <location>
        <begin position="424"/>
        <end position="448"/>
    </location>
</feature>
<feature type="compositionally biased region" description="Pro residues" evidence="3">
    <location>
        <begin position="1"/>
        <end position="29"/>
    </location>
</feature>
<feature type="compositionally biased region" description="Polar residues" evidence="3">
    <location>
        <begin position="63"/>
        <end position="78"/>
    </location>
</feature>
<feature type="compositionally biased region" description="Polar residues" evidence="3">
    <location>
        <begin position="87"/>
        <end position="96"/>
    </location>
</feature>
<feature type="compositionally biased region" description="Pro residues" evidence="3">
    <location>
        <begin position="166"/>
        <end position="192"/>
    </location>
</feature>
<feature type="compositionally biased region" description="Pro residues" evidence="3">
    <location>
        <begin position="215"/>
        <end position="239"/>
    </location>
</feature>
<feature type="compositionally biased region" description="Pro residues" evidence="3">
    <location>
        <begin position="256"/>
        <end position="271"/>
    </location>
</feature>
<feature type="compositionally biased region" description="Low complexity" evidence="3">
    <location>
        <begin position="277"/>
        <end position="288"/>
    </location>
</feature>
<feature type="compositionally biased region" description="Pro residues" evidence="3">
    <location>
        <begin position="289"/>
        <end position="298"/>
    </location>
</feature>
<feature type="compositionally biased region" description="Low complexity" evidence="3">
    <location>
        <begin position="299"/>
        <end position="308"/>
    </location>
</feature>
<feature type="compositionally biased region" description="Low complexity" evidence="3">
    <location>
        <begin position="331"/>
        <end position="345"/>
    </location>
</feature>
<feature type="compositionally biased region" description="Low complexity" evidence="3">
    <location>
        <begin position="393"/>
        <end position="404"/>
    </location>
</feature>
<feature type="compositionally biased region" description="Polar residues" evidence="3">
    <location>
        <begin position="473"/>
        <end position="483"/>
    </location>
</feature>
<feature type="modified residue" description="Asymmetric dimethylarginine" evidence="6">
    <location>
        <position position="46"/>
    </location>
</feature>
<feature type="modified residue" description="Phosphoserine" evidence="5">
    <location>
        <position position="149"/>
    </location>
</feature>
<feature type="modified residue" description="Phosphoserine" evidence="5">
    <location>
        <position position="202"/>
    </location>
</feature>
<feature type="modified residue" description="Phosphoserine" evidence="5">
    <location>
        <position position="383"/>
    </location>
</feature>
<feature type="sequence variant" id="VAR_043729" description="In dbSNP:rs3750092.">
    <original>E</original>
    <variation>G</variation>
    <location>
        <position position="321"/>
    </location>
</feature>
<comment type="function">
    <text evidence="1">May be a regulator of cytoskeletal organization. May have a role in spermatogenesis (By similarity).</text>
</comment>
<comment type="subunit">
    <text evidence="1">Interacts with WASL, and monomeric and filamentous actin.</text>
</comment>
<comment type="interaction">
    <interactant intactId="EBI-3959572">
        <id>A6NGB9</id>
    </interactant>
    <interactant intactId="EBI-957615">
        <id>O00401</id>
        <label>WASL</label>
    </interactant>
    <organismsDiffer>false</organismsDiffer>
    <experiments>4</experiments>
</comment>
<comment type="subcellular location">
    <subcellularLocation>
        <location>Cytoplasm</location>
    </subcellularLocation>
    <text evidence="1">In hippocampal neurons colocalizes with WASL in the cell body, axons and the growth cone.</text>
</comment>
<comment type="domain">
    <text evidence="1">The WH2 domain is found in a number of putative actin-binding proteins.</text>
</comment>
<comment type="domain">
    <text evidence="1">The profilin-binding motif has been implicated in the interaction with profilin and SH3 domains.</text>
</comment>
<comment type="domain">
    <text evidence="1">The KLKR motif is essential for G-actin binding and for actin polymerization.</text>
</comment>
<comment type="similarity">
    <text evidence="4">Belongs to the verprolin family.</text>
</comment>
<sequence length="483" mass="49458">MPVPPPPPPPLPPPPPPLGAPPPPPPSAPPVSTDTSSLRRADPKGRSALLADIQQGTRLRKVTQINDRSAPQIESSKGTNKEGGGSANTRGASTPPTLGDLFAGGFPVLRPAGQRDVAGGKTGQGPGSRAPSPRLPNKTISGPLIPPASPRLGNTSEAHGAARTAPPRPNVPAPPPPTPPPPPPPLPPPLPSSSPIKTPLVSPPGPLTKGNLPVVAPPVPCAPPPPPPPPPPTPPPLPPASVLSDKAVKPQLAPLHLPPIPPPLPLLPPCGYPGLKAEPASPAQDAQEPPAPPPPLPPYASCSPRASLPAPPLPGVNSSSETPPPLPPKSPSFQAPPQKAGAQALPAPPAPPGSQPFLQKKRHGRPGAGGGKLNPPPAPPARSPTTELSSKSQQATAWTPTQQPGGQLRNGSLHIIDDFESKFTFHSVEDFPPPDEYKPCQKIYPSKIPRSRTPGPWLQAEAVGQSSDDIKGRNSQLSLKTLR</sequence>
<organism>
    <name type="scientific">Homo sapiens</name>
    <name type="common">Human</name>
    <dbReference type="NCBI Taxonomy" id="9606"/>
    <lineage>
        <taxon>Eukaryota</taxon>
        <taxon>Metazoa</taxon>
        <taxon>Chordata</taxon>
        <taxon>Craniata</taxon>
        <taxon>Vertebrata</taxon>
        <taxon>Euteleostomi</taxon>
        <taxon>Mammalia</taxon>
        <taxon>Eutheria</taxon>
        <taxon>Euarchontoglires</taxon>
        <taxon>Primates</taxon>
        <taxon>Haplorrhini</taxon>
        <taxon>Catarrhini</taxon>
        <taxon>Hominidae</taxon>
        <taxon>Homo</taxon>
    </lineage>
</organism>
<evidence type="ECO:0000250" key="1"/>
<evidence type="ECO:0000255" key="2">
    <source>
        <dbReference type="PROSITE-ProRule" id="PRU00406"/>
    </source>
</evidence>
<evidence type="ECO:0000256" key="3">
    <source>
        <dbReference type="SAM" id="MobiDB-lite"/>
    </source>
</evidence>
<evidence type="ECO:0000305" key="4"/>
<evidence type="ECO:0007744" key="5">
    <source>
    </source>
</evidence>
<evidence type="ECO:0007744" key="6">
    <source>
    </source>
</evidence>
<reference key="1">
    <citation type="journal article" date="2003" name="Nature">
        <title>The DNA sequence of human chromosome 7.</title>
        <authorList>
            <person name="Hillier L.W."/>
            <person name="Fulton R.S."/>
            <person name="Fulton L.A."/>
            <person name="Graves T.A."/>
            <person name="Pepin K.H."/>
            <person name="Wagner-McPherson C."/>
            <person name="Layman D."/>
            <person name="Maas J."/>
            <person name="Jaeger S."/>
            <person name="Walker R."/>
            <person name="Wylie K."/>
            <person name="Sekhon M."/>
            <person name="Becker M.C."/>
            <person name="O'Laughlin M.D."/>
            <person name="Schaller M.E."/>
            <person name="Fewell G.A."/>
            <person name="Delehaunty K.D."/>
            <person name="Miner T.L."/>
            <person name="Nash W.E."/>
            <person name="Cordes M."/>
            <person name="Du H."/>
            <person name="Sun H."/>
            <person name="Edwards J."/>
            <person name="Bradshaw-Cordum H."/>
            <person name="Ali J."/>
            <person name="Andrews S."/>
            <person name="Isak A."/>
            <person name="Vanbrunt A."/>
            <person name="Nguyen C."/>
            <person name="Du F."/>
            <person name="Lamar B."/>
            <person name="Courtney L."/>
            <person name="Kalicki J."/>
            <person name="Ozersky P."/>
            <person name="Bielicki L."/>
            <person name="Scott K."/>
            <person name="Holmes A."/>
            <person name="Harkins R."/>
            <person name="Harris A."/>
            <person name="Strong C.M."/>
            <person name="Hou S."/>
            <person name="Tomlinson C."/>
            <person name="Dauphin-Kohlberg S."/>
            <person name="Kozlowicz-Reilly A."/>
            <person name="Leonard S."/>
            <person name="Rohlfing T."/>
            <person name="Rock S.M."/>
            <person name="Tin-Wollam A.-M."/>
            <person name="Abbott A."/>
            <person name="Minx P."/>
            <person name="Maupin R."/>
            <person name="Strowmatt C."/>
            <person name="Latreille P."/>
            <person name="Miller N."/>
            <person name="Johnson D."/>
            <person name="Murray J."/>
            <person name="Woessner J.P."/>
            <person name="Wendl M.C."/>
            <person name="Yang S.-P."/>
            <person name="Schultz B.R."/>
            <person name="Wallis J.W."/>
            <person name="Spieth J."/>
            <person name="Bieri T.A."/>
            <person name="Nelson J.O."/>
            <person name="Berkowicz N."/>
            <person name="Wohldmann P.E."/>
            <person name="Cook L.L."/>
            <person name="Hickenbotham M.T."/>
            <person name="Eldred J."/>
            <person name="Williams D."/>
            <person name="Bedell J.A."/>
            <person name="Mardis E.R."/>
            <person name="Clifton S.W."/>
            <person name="Chissoe S.L."/>
            <person name="Marra M.A."/>
            <person name="Raymond C."/>
            <person name="Haugen E."/>
            <person name="Gillett W."/>
            <person name="Zhou Y."/>
            <person name="James R."/>
            <person name="Phelps K."/>
            <person name="Iadanoto S."/>
            <person name="Bubb K."/>
            <person name="Simms E."/>
            <person name="Levy R."/>
            <person name="Clendenning J."/>
            <person name="Kaul R."/>
            <person name="Kent W.J."/>
            <person name="Furey T.S."/>
            <person name="Baertsch R.A."/>
            <person name="Brent M.R."/>
            <person name="Keibler E."/>
            <person name="Flicek P."/>
            <person name="Bork P."/>
            <person name="Suyama M."/>
            <person name="Bailey J.A."/>
            <person name="Portnoy M.E."/>
            <person name="Torrents D."/>
            <person name="Chinwalla A.T."/>
            <person name="Gish W.R."/>
            <person name="Eddy S.R."/>
            <person name="McPherson J.D."/>
            <person name="Olson M.V."/>
            <person name="Eichler E.E."/>
            <person name="Green E.D."/>
            <person name="Waterston R.H."/>
            <person name="Wilson R.K."/>
        </authorList>
    </citation>
    <scope>NUCLEOTIDE SEQUENCE [LARGE SCALE GENOMIC DNA]</scope>
</reference>
<reference key="2">
    <citation type="submission" date="2005-07" db="EMBL/GenBank/DDBJ databases">
        <authorList>
            <person name="Mural R.J."/>
            <person name="Istrail S."/>
            <person name="Sutton G."/>
            <person name="Florea L."/>
            <person name="Halpern A.L."/>
            <person name="Mobarry C.M."/>
            <person name="Lippert R."/>
            <person name="Walenz B."/>
            <person name="Shatkay H."/>
            <person name="Dew I."/>
            <person name="Miller J.R."/>
            <person name="Flanigan M.J."/>
            <person name="Edwards N.J."/>
            <person name="Bolanos R."/>
            <person name="Fasulo D."/>
            <person name="Halldorsson B.V."/>
            <person name="Hannenhalli S."/>
            <person name="Turner R."/>
            <person name="Yooseph S."/>
            <person name="Lu F."/>
            <person name="Nusskern D.R."/>
            <person name="Shue B.C."/>
            <person name="Zheng X.H."/>
            <person name="Zhong F."/>
            <person name="Delcher A.L."/>
            <person name="Huson D.H."/>
            <person name="Kravitz S.A."/>
            <person name="Mouchard L."/>
            <person name="Reinert K."/>
            <person name="Remington K.A."/>
            <person name="Clark A.G."/>
            <person name="Waterman M.S."/>
            <person name="Eichler E.E."/>
            <person name="Adams M.D."/>
            <person name="Hunkapiller M.W."/>
            <person name="Myers E.W."/>
            <person name="Venter J.C."/>
        </authorList>
    </citation>
    <scope>NUCLEOTIDE SEQUENCE [LARGE SCALE GENOMIC DNA]</scope>
</reference>
<reference key="3">
    <citation type="submission" date="2003-01" db="EMBL/GenBank/DDBJ databases">
        <authorList>
            <person name="Ebert L."/>
            <person name="Heil O."/>
            <person name="Hennig S."/>
            <person name="Neubert P."/>
            <person name="Partsch E."/>
            <person name="Peters M."/>
            <person name="Radelof U."/>
            <person name="Schneider D."/>
            <person name="Korn B."/>
        </authorList>
    </citation>
    <scope>NUCLEOTIDE SEQUENCE [LARGE SCALE MRNA] OF 328-483</scope>
</reference>
<reference key="4">
    <citation type="journal article" date="2002" name="Curr. Biol.">
        <title>The WH1 and EVH1 domains of WASP and Ena/VASP family members bind distinct sequence motifs.</title>
        <authorList>
            <person name="Zettl M."/>
            <person name="Way M."/>
        </authorList>
    </citation>
    <scope>SYNTHESIS OF 420-430</scope>
</reference>
<reference key="5">
    <citation type="journal article" date="2013" name="J. Proteome Res.">
        <title>Toward a comprehensive characterization of a human cancer cell phosphoproteome.</title>
        <authorList>
            <person name="Zhou H."/>
            <person name="Di Palma S."/>
            <person name="Preisinger C."/>
            <person name="Peng M."/>
            <person name="Polat A.N."/>
            <person name="Heck A.J."/>
            <person name="Mohammed S."/>
        </authorList>
    </citation>
    <scope>PHOSPHORYLATION [LARGE SCALE ANALYSIS] AT SER-149; SER-202 AND SER-383</scope>
    <scope>IDENTIFICATION BY MASS SPECTROMETRY [LARGE SCALE ANALYSIS]</scope>
    <source>
        <tissue>Erythroleukemia</tissue>
    </source>
</reference>
<reference key="6">
    <citation type="journal article" date="2014" name="Mol. Cell. Proteomics">
        <title>Immunoaffinity enrichment and mass spectrometry analysis of protein methylation.</title>
        <authorList>
            <person name="Guo A."/>
            <person name="Gu H."/>
            <person name="Zhou J."/>
            <person name="Mulhern D."/>
            <person name="Wang Y."/>
            <person name="Lee K.A."/>
            <person name="Yang V."/>
            <person name="Aguiar M."/>
            <person name="Kornhauser J."/>
            <person name="Jia X."/>
            <person name="Ren J."/>
            <person name="Beausoleil S.A."/>
            <person name="Silva J.C."/>
            <person name="Vemulapalli V."/>
            <person name="Bedford M.T."/>
            <person name="Comb M.J."/>
        </authorList>
    </citation>
    <scope>METHYLATION [LARGE SCALE ANALYSIS] AT ARG-46</scope>
    <scope>IDENTIFICATION BY MASS SPECTROMETRY [LARGE SCALE ANALYSIS]</scope>
    <source>
        <tissue>Colon carcinoma</tissue>
    </source>
</reference>
<protein>
    <recommendedName>
        <fullName>WAS/WASL-interacting protein family member 3</fullName>
    </recommendedName>
    <alternativeName>
        <fullName>Corticosteroids and regional expression protein 16 homolog</fullName>
    </alternativeName>
</protein>
<gene>
    <name type="primary">WIPF3</name>
    <name type="synonym">CR16</name>
</gene>
<proteinExistence type="evidence at protein level"/>